<dbReference type="EC" id="2.3.1.274" evidence="1"/>
<dbReference type="EMBL" id="CP000489">
    <property type="protein sequence ID" value="ABL69957.1"/>
    <property type="molecule type" value="Genomic_DNA"/>
</dbReference>
<dbReference type="RefSeq" id="WP_011748154.1">
    <property type="nucleotide sequence ID" value="NC_008686.1"/>
</dbReference>
<dbReference type="SMR" id="A1B363"/>
<dbReference type="STRING" id="318586.Pden_1860"/>
<dbReference type="EnsemblBacteria" id="ABL69957">
    <property type="protein sequence ID" value="ABL69957"/>
    <property type="gene ID" value="Pden_1860"/>
</dbReference>
<dbReference type="GeneID" id="93450256"/>
<dbReference type="KEGG" id="pde:Pden_1860"/>
<dbReference type="eggNOG" id="COG0416">
    <property type="taxonomic scope" value="Bacteria"/>
</dbReference>
<dbReference type="HOGENOM" id="CLU_039379_1_0_5"/>
<dbReference type="OrthoDB" id="9806408at2"/>
<dbReference type="UniPathway" id="UPA00085"/>
<dbReference type="Proteomes" id="UP000000361">
    <property type="component" value="Chromosome 1"/>
</dbReference>
<dbReference type="GO" id="GO:0005737">
    <property type="term" value="C:cytoplasm"/>
    <property type="evidence" value="ECO:0007669"/>
    <property type="project" value="UniProtKB-SubCell"/>
</dbReference>
<dbReference type="GO" id="GO:0043811">
    <property type="term" value="F:phosphate:acyl-[acyl carrier protein] acyltransferase activity"/>
    <property type="evidence" value="ECO:0007669"/>
    <property type="project" value="UniProtKB-UniRule"/>
</dbReference>
<dbReference type="GO" id="GO:0006633">
    <property type="term" value="P:fatty acid biosynthetic process"/>
    <property type="evidence" value="ECO:0007669"/>
    <property type="project" value="UniProtKB-UniRule"/>
</dbReference>
<dbReference type="GO" id="GO:0008654">
    <property type="term" value="P:phospholipid biosynthetic process"/>
    <property type="evidence" value="ECO:0007669"/>
    <property type="project" value="UniProtKB-KW"/>
</dbReference>
<dbReference type="Gene3D" id="3.40.718.10">
    <property type="entry name" value="Isopropylmalate Dehydrogenase"/>
    <property type="match status" value="1"/>
</dbReference>
<dbReference type="HAMAP" id="MF_00019">
    <property type="entry name" value="PlsX"/>
    <property type="match status" value="1"/>
</dbReference>
<dbReference type="InterPro" id="IPR003664">
    <property type="entry name" value="FA_synthesis"/>
</dbReference>
<dbReference type="InterPro" id="IPR012281">
    <property type="entry name" value="Phospholipid_synth_PlsX-like"/>
</dbReference>
<dbReference type="NCBIfam" id="TIGR00182">
    <property type="entry name" value="plsX"/>
    <property type="match status" value="1"/>
</dbReference>
<dbReference type="PANTHER" id="PTHR30100">
    <property type="entry name" value="FATTY ACID/PHOSPHOLIPID SYNTHESIS PROTEIN PLSX"/>
    <property type="match status" value="1"/>
</dbReference>
<dbReference type="PANTHER" id="PTHR30100:SF1">
    <property type="entry name" value="PHOSPHATE ACYLTRANSFERASE"/>
    <property type="match status" value="1"/>
</dbReference>
<dbReference type="Pfam" id="PF02504">
    <property type="entry name" value="FA_synthesis"/>
    <property type="match status" value="1"/>
</dbReference>
<dbReference type="PIRSF" id="PIRSF002465">
    <property type="entry name" value="Phsphlp_syn_PlsX"/>
    <property type="match status" value="1"/>
</dbReference>
<dbReference type="SUPFAM" id="SSF53659">
    <property type="entry name" value="Isocitrate/Isopropylmalate dehydrogenase-like"/>
    <property type="match status" value="1"/>
</dbReference>
<proteinExistence type="inferred from homology"/>
<gene>
    <name evidence="1" type="primary">plsX</name>
    <name type="ordered locus">Pden_1860</name>
</gene>
<comment type="function">
    <text evidence="1">Catalyzes the reversible formation of acyl-phosphate (acyl-PO(4)) from acyl-[acyl-carrier-protein] (acyl-ACP). This enzyme utilizes acyl-ACP as fatty acyl donor, but not acyl-CoA.</text>
</comment>
<comment type="catalytic activity">
    <reaction evidence="1">
        <text>a fatty acyl-[ACP] + phosphate = an acyl phosphate + holo-[ACP]</text>
        <dbReference type="Rhea" id="RHEA:42292"/>
        <dbReference type="Rhea" id="RHEA-COMP:9685"/>
        <dbReference type="Rhea" id="RHEA-COMP:14125"/>
        <dbReference type="ChEBI" id="CHEBI:43474"/>
        <dbReference type="ChEBI" id="CHEBI:59918"/>
        <dbReference type="ChEBI" id="CHEBI:64479"/>
        <dbReference type="ChEBI" id="CHEBI:138651"/>
        <dbReference type="EC" id="2.3.1.274"/>
    </reaction>
</comment>
<comment type="pathway">
    <text evidence="1">Lipid metabolism; phospholipid metabolism.</text>
</comment>
<comment type="subunit">
    <text evidence="1">Homodimer. Probably interacts with PlsY.</text>
</comment>
<comment type="subcellular location">
    <subcellularLocation>
        <location evidence="1">Cytoplasm</location>
    </subcellularLocation>
    <text evidence="1">Associated with the membrane possibly through PlsY.</text>
</comment>
<comment type="similarity">
    <text evidence="1">Belongs to the PlsX family.</text>
</comment>
<name>PLSX_PARDP</name>
<evidence type="ECO:0000255" key="1">
    <source>
        <dbReference type="HAMAP-Rule" id="MF_00019"/>
    </source>
</evidence>
<reference key="1">
    <citation type="submission" date="2006-12" db="EMBL/GenBank/DDBJ databases">
        <title>Complete sequence of chromosome 1 of Paracoccus denitrificans PD1222.</title>
        <authorList>
            <person name="Copeland A."/>
            <person name="Lucas S."/>
            <person name="Lapidus A."/>
            <person name="Barry K."/>
            <person name="Detter J.C."/>
            <person name="Glavina del Rio T."/>
            <person name="Hammon N."/>
            <person name="Israni S."/>
            <person name="Dalin E."/>
            <person name="Tice H."/>
            <person name="Pitluck S."/>
            <person name="Munk A.C."/>
            <person name="Brettin T."/>
            <person name="Bruce D."/>
            <person name="Han C."/>
            <person name="Tapia R."/>
            <person name="Gilna P."/>
            <person name="Schmutz J."/>
            <person name="Larimer F."/>
            <person name="Land M."/>
            <person name="Hauser L."/>
            <person name="Kyrpides N."/>
            <person name="Lykidis A."/>
            <person name="Spiro S."/>
            <person name="Richardson D.J."/>
            <person name="Moir J.W.B."/>
            <person name="Ferguson S.J."/>
            <person name="van Spanning R.J.M."/>
            <person name="Richardson P."/>
        </authorList>
    </citation>
    <scope>NUCLEOTIDE SEQUENCE [LARGE SCALE GENOMIC DNA]</scope>
    <source>
        <strain>Pd 1222</strain>
    </source>
</reference>
<sequence>MASADSNTLPRAPGDGDGVVISVDAMGGDRGPATVVAGMAESAGKNPGIRFIVHGPQAELERLIARRGDLAGRCDIRDAAGVVTMDDKPSQVLRKGEGTSMWSTLESVRQGEATAAVSCGNTGALMALSMLRLRKLPGVNRPAIACLWPSRNPQGFNVMLDVGADIRADAQDLLTYALMGASYARNGFGLERPRVGLLNVGTEEHKGRPELKQAHELIPTTAQAANFDYVGFVEGGDLPSARVDVIVTDGFTGNVALKTGEGTAKLVGELLKEAFGKSVMSKFAALLAMGSLKRLQKRIDPRRINGGVFLGLNGTVVKSHGSADATGVSAAIKLAFRLAQSGFQDRLAARVAQSVAAAGQINGSKESEAS</sequence>
<accession>A1B363</accession>
<organism>
    <name type="scientific">Paracoccus denitrificans (strain Pd 1222)</name>
    <dbReference type="NCBI Taxonomy" id="318586"/>
    <lineage>
        <taxon>Bacteria</taxon>
        <taxon>Pseudomonadati</taxon>
        <taxon>Pseudomonadota</taxon>
        <taxon>Alphaproteobacteria</taxon>
        <taxon>Rhodobacterales</taxon>
        <taxon>Paracoccaceae</taxon>
        <taxon>Paracoccus</taxon>
    </lineage>
</organism>
<keyword id="KW-0963">Cytoplasm</keyword>
<keyword id="KW-0444">Lipid biosynthesis</keyword>
<keyword id="KW-0443">Lipid metabolism</keyword>
<keyword id="KW-0594">Phospholipid biosynthesis</keyword>
<keyword id="KW-1208">Phospholipid metabolism</keyword>
<keyword id="KW-1185">Reference proteome</keyword>
<keyword id="KW-0808">Transferase</keyword>
<protein>
    <recommendedName>
        <fullName evidence="1">Phosphate acyltransferase</fullName>
        <ecNumber evidence="1">2.3.1.274</ecNumber>
    </recommendedName>
    <alternativeName>
        <fullName evidence="1">Acyl-ACP phosphotransacylase</fullName>
    </alternativeName>
    <alternativeName>
        <fullName evidence="1">Acyl-[acyl-carrier-protein]--phosphate acyltransferase</fullName>
    </alternativeName>
    <alternativeName>
        <fullName evidence="1">Phosphate-acyl-ACP acyltransferase</fullName>
    </alternativeName>
</protein>
<feature type="chain" id="PRO_0000329246" description="Phosphate acyltransferase">
    <location>
        <begin position="1"/>
        <end position="370"/>
    </location>
</feature>